<evidence type="ECO:0000250" key="1"/>
<evidence type="ECO:0000256" key="2">
    <source>
        <dbReference type="SAM" id="MobiDB-lite"/>
    </source>
</evidence>
<evidence type="ECO:0000305" key="3"/>
<reference key="1">
    <citation type="journal article" date="2015" name="Genome Announc.">
        <title>Genome sequence of the AIDS-associated pathogen Penicillium marneffei (ATCC18224) and its near taxonomic relative Talaromyces stipitatus (ATCC10500).</title>
        <authorList>
            <person name="Nierman W.C."/>
            <person name="Fedorova-Abrams N.D."/>
            <person name="Andrianopoulos A."/>
        </authorList>
    </citation>
    <scope>NUCLEOTIDE SEQUENCE [LARGE SCALE GENOMIC DNA]</scope>
    <source>
        <strain>ATCC 10500 / CBS 375.48 / QM 6759 / NRRL 1006</strain>
    </source>
</reference>
<keyword id="KW-0963">Cytoplasm</keyword>
<keyword id="KW-0539">Nucleus</keyword>
<keyword id="KW-0653">Protein transport</keyword>
<keyword id="KW-1185">Reference proteome</keyword>
<keyword id="KW-0813">Transport</keyword>
<name>STS1_TALSN</name>
<organism>
    <name type="scientific">Talaromyces stipitatus (strain ATCC 10500 / CBS 375.48 / QM 6759 / NRRL 1006)</name>
    <name type="common">Penicillium stipitatum</name>
    <dbReference type="NCBI Taxonomy" id="441959"/>
    <lineage>
        <taxon>Eukaryota</taxon>
        <taxon>Fungi</taxon>
        <taxon>Dikarya</taxon>
        <taxon>Ascomycota</taxon>
        <taxon>Pezizomycotina</taxon>
        <taxon>Eurotiomycetes</taxon>
        <taxon>Eurotiomycetidae</taxon>
        <taxon>Eurotiales</taxon>
        <taxon>Trichocomaceae</taxon>
        <taxon>Talaromyces</taxon>
        <taxon>Talaromyces sect. Talaromyces</taxon>
    </lineage>
</organism>
<gene>
    <name type="primary">sts1</name>
    <name type="ORF">TSTA_071710</name>
</gene>
<proteinExistence type="inferred from homology"/>
<sequence>MNSLVATPPVPPHFYEHSRFSPSRSMSTPAQQSSNRKRKAEDDGNDVDIRMSASPTNSPAFTPRPLPNRQMKRSRPNVSGRPLSLPRLLETLDTDALRSVLQAVCQRHPELGDEVVHTAPRPSVSSTLQVLRNYQSTLQTSIPLGSGEYLSDYAYNRVKQHLFNLLDALSDFTPHFLPPNESQTSVSLTYLDGATDIIHSLPKWQTPRHNIGRDSAYEEICKAWVLVIREAAKRGGGIQLQYGGWDQKLAKHNETSGGKLQDAINELQNSLGWMGSSALPGVGAAGTQGGDQTSIREQLLSGTYGMGMPLKVGPW</sequence>
<accession>B8LTU5</accession>
<feature type="chain" id="PRO_0000409434" description="Tethering factor for nuclear proteasome sts1">
    <location>
        <begin position="1"/>
        <end position="315"/>
    </location>
</feature>
<feature type="region of interest" description="Disordered" evidence="2">
    <location>
        <begin position="1"/>
        <end position="83"/>
    </location>
</feature>
<feature type="compositionally biased region" description="Polar residues" evidence="2">
    <location>
        <begin position="20"/>
        <end position="34"/>
    </location>
</feature>
<protein>
    <recommendedName>
        <fullName>Tethering factor for nuclear proteasome sts1</fullName>
    </recommendedName>
</protein>
<dbReference type="EMBL" id="EQ962652">
    <property type="protein sequence ID" value="EED23775.1"/>
    <property type="molecule type" value="Genomic_DNA"/>
</dbReference>
<dbReference type="RefSeq" id="XP_002341162.1">
    <property type="nucleotide sequence ID" value="XM_002341121.1"/>
</dbReference>
<dbReference type="SMR" id="B8LTU5"/>
<dbReference type="FunCoup" id="B8LTU5">
    <property type="interactions" value="12"/>
</dbReference>
<dbReference type="STRING" id="441959.B8LTU5"/>
<dbReference type="GeneID" id="8100238"/>
<dbReference type="VEuPathDB" id="FungiDB:TSTA_071710"/>
<dbReference type="eggNOG" id="ENOG502RNK4">
    <property type="taxonomic scope" value="Eukaryota"/>
</dbReference>
<dbReference type="HOGENOM" id="CLU_033658_0_0_1"/>
<dbReference type="InParanoid" id="B8LTU5"/>
<dbReference type="OMA" id="DYTPHFL"/>
<dbReference type="OrthoDB" id="10061064at2759"/>
<dbReference type="PhylomeDB" id="B8LTU5"/>
<dbReference type="Proteomes" id="UP000001745">
    <property type="component" value="Unassembled WGS sequence"/>
</dbReference>
<dbReference type="GO" id="GO:0005737">
    <property type="term" value="C:cytoplasm"/>
    <property type="evidence" value="ECO:0007669"/>
    <property type="project" value="UniProtKB-SubCell"/>
</dbReference>
<dbReference type="GO" id="GO:0031965">
    <property type="term" value="C:nuclear membrane"/>
    <property type="evidence" value="ECO:0007669"/>
    <property type="project" value="TreeGrafter"/>
</dbReference>
<dbReference type="GO" id="GO:0070628">
    <property type="term" value="F:proteasome binding"/>
    <property type="evidence" value="ECO:0007669"/>
    <property type="project" value="TreeGrafter"/>
</dbReference>
<dbReference type="GO" id="GO:0071630">
    <property type="term" value="P:nuclear protein quality control by the ubiquitin-proteasome system"/>
    <property type="evidence" value="ECO:0007669"/>
    <property type="project" value="InterPro"/>
</dbReference>
<dbReference type="GO" id="GO:0031144">
    <property type="term" value="P:proteasome localization"/>
    <property type="evidence" value="ECO:0007669"/>
    <property type="project" value="InterPro"/>
</dbReference>
<dbReference type="GO" id="GO:0015031">
    <property type="term" value="P:protein transport"/>
    <property type="evidence" value="ECO:0007669"/>
    <property type="project" value="UniProtKB-KW"/>
</dbReference>
<dbReference type="FunFam" id="1.20.58.1590:FF:000001">
    <property type="entry name" value="Tethering factor for nuclear proteasome STS1"/>
    <property type="match status" value="1"/>
</dbReference>
<dbReference type="Gene3D" id="1.20.58.1590">
    <property type="entry name" value="Tethering factor for nuclear proteasome Cut8/Sts1"/>
    <property type="match status" value="1"/>
</dbReference>
<dbReference type="InterPro" id="IPR013868">
    <property type="entry name" value="Cut8/Sts1_fam"/>
</dbReference>
<dbReference type="InterPro" id="IPR038422">
    <property type="entry name" value="Cut8/Sts1_sf"/>
</dbReference>
<dbReference type="PANTHER" id="PTHR28032">
    <property type="entry name" value="FI02826P"/>
    <property type="match status" value="1"/>
</dbReference>
<dbReference type="PANTHER" id="PTHR28032:SF1">
    <property type="entry name" value="FI02826P"/>
    <property type="match status" value="1"/>
</dbReference>
<dbReference type="Pfam" id="PF08559">
    <property type="entry name" value="Cut8"/>
    <property type="match status" value="1"/>
</dbReference>
<comment type="function">
    <text evidence="1">Involved in ubiquitin-mediated protein degradation. Regulatory factor in the ubiquitin/proteasome pathway that controls the turnover of proteasome substrates. Targets proteasomes to the nucleus and facilitates the degradation of nuclear proteins (By similarity).</text>
</comment>
<comment type="subunit">
    <text evidence="1">Binds the proteasome.</text>
</comment>
<comment type="subcellular location">
    <subcellularLocation>
        <location evidence="1">Cytoplasm</location>
    </subcellularLocation>
    <subcellularLocation>
        <location evidence="1">Nucleus</location>
    </subcellularLocation>
</comment>
<comment type="similarity">
    <text evidence="3">Belongs to the cut8/STS1 family.</text>
</comment>